<accession>A0A0E3NFS5</accession>
<reference key="1">
    <citation type="submission" date="2014-07" db="EMBL/GenBank/DDBJ databases">
        <title>Methanogenic archaea and the global carbon cycle.</title>
        <authorList>
            <person name="Henriksen J.R."/>
            <person name="Luke J."/>
            <person name="Reinhart S."/>
            <person name="Benedict M.N."/>
            <person name="Youngblut N.D."/>
            <person name="Metcalf M.E."/>
            <person name="Whitaker R.J."/>
            <person name="Metcalf W.W."/>
        </authorList>
    </citation>
    <scope>NUCLEOTIDE SEQUENCE [LARGE SCALE GENOMIC DNA]</scope>
    <source>
        <strain>ATCC 43570 / DSM 1825 / OCM 12 / VKM B-1830 / TM-1</strain>
    </source>
</reference>
<reference key="2">
    <citation type="journal article" date="1998" name="Biochemistry">
        <title>Purification and properties of the heme- and iron-sulfur-containing heterodisulfide reductase from Methanosarcina thermophila.</title>
        <authorList>
            <person name="Simianu M."/>
            <person name="Murakami E."/>
            <person name="Brewer J.M."/>
            <person name="Ragsdale S.W."/>
        </authorList>
    </citation>
    <scope>PROTEIN SEQUENCE OF 2-21</scope>
    <scope>FUNCTION</scope>
    <scope>CATALYTIC ACTIVITY</scope>
    <scope>COFACTOR</scope>
    <scope>SUBUNIT</scope>
    <source>
        <strain>ATCC 43570 / DSM 1825 / OCM 12 / VKM B-1830 / TM-1</strain>
    </source>
</reference>
<reference key="3">
    <citation type="journal article" date="1998" name="FEBS Lett.">
        <title>The F420H2:heterodisulfide oxidoreductase system from Methanosarcina species. 2-Hydroxyphenazine mediates electron transfer from F420H2 dehydrogenase to heterodisulfide reductase.</title>
        <authorList>
            <person name="Baeumer S."/>
            <person name="Murakami E."/>
            <person name="Brodersen J."/>
            <person name="Gottschalk G."/>
            <person name="Ragsdale S.W."/>
            <person name="Deppenmeier U."/>
        </authorList>
    </citation>
    <scope>FUNCTION</scope>
    <scope>SOURCE OF ELECTRONS</scope>
    <scope>CATALYTIC ACTIVITY</scope>
    <source>
        <strain>ATCC 43570 / DSM 1825 / OCM 12 / VKM B-1830 / TM-1</strain>
    </source>
</reference>
<reference key="4">
    <citation type="journal article" date="2001" name="J. Biol. Chem.">
        <title>Characterization of the intramolecular electron transfer pathway from 2-hydroxyphenazine to the heterodisulfide reductase from Methanosarcina thermophila.</title>
        <authorList>
            <person name="Murakami E."/>
            <person name="Deppenmeier U."/>
            <person name="Ragsdale S.W."/>
        </authorList>
    </citation>
    <scope>FUNCTION</scope>
    <scope>CATALYTIC ACTIVITY</scope>
    <scope>BIOPHYSICOCHEMICAL PROPERTIES</scope>
    <scope>PATHWAY</scope>
    <source>
        <strain>ATCC 43570 / DSM 1825 / OCM 12 / VKM B-1830 / TM-1</strain>
    </source>
</reference>
<keyword id="KW-1003">Cell membrane</keyword>
<keyword id="KW-0903">Direct protein sequencing</keyword>
<keyword id="KW-0349">Heme</keyword>
<keyword id="KW-0408">Iron</keyword>
<keyword id="KW-0472">Membrane</keyword>
<keyword id="KW-0479">Metal-binding</keyword>
<keyword id="KW-0484">Methanogenesis</keyword>
<keyword id="KW-0560">Oxidoreductase</keyword>
<keyword id="KW-0812">Transmembrane</keyword>
<keyword id="KW-1133">Transmembrane helix</keyword>
<comment type="function">
    <text evidence="2 3 4">Part of a complex that catalyzes the reversible reduction of CoM-S-S-CoB to the thiol-coenzymes H-S-CoM (coenzyme M) and H-S-CoB (coenzyme B). HdrE may be responsible for anchoring the complex to the membrane (PubMed:11034998, PubMed:9654152, PubMed:9665708). Electrons probably transfer from phenazine to the high potential 4Fe cluster in HdrD subunit, then to the low potential heme in HdrE subunit and finally to CoM-S-S-CoB (PubMed:11034998).</text>
</comment>
<comment type="catalytic activity">
    <reaction evidence="2 3 8">
        <text>methanophenazine + coenzyme B + coenzyme M = dihydromethanophenazine + coenzyme M-coenzyme B heterodisulfide</text>
        <dbReference type="Rhea" id="RHEA:18085"/>
        <dbReference type="ChEBI" id="CHEBI:29118"/>
        <dbReference type="ChEBI" id="CHEBI:50375"/>
        <dbReference type="ChEBI" id="CHEBI:58319"/>
        <dbReference type="ChEBI" id="CHEBI:58411"/>
        <dbReference type="ChEBI" id="CHEBI:58596"/>
        <dbReference type="EC" id="1.8.98.1"/>
    </reaction>
</comment>
<comment type="cofactor">
    <cofactor evidence="4">
        <name>heme b</name>
        <dbReference type="ChEBI" id="CHEBI:60344"/>
    </cofactor>
    <text evidence="4">Binds 2 heme b (iron(II)-protoporphyrin IX) groups per subunit.</text>
</comment>
<comment type="biophysicochemical properties">
    <kinetics>
        <KM evidence="2">92 uM for reduced 2-hydroxyphenazine</KM>
        <KM evidence="2">144 uM for CoM-S-S-CoB</KM>
        <text evidence="2">kcat is 74 sec(-1) at 25 degrees Celsius.</text>
    </kinetics>
</comment>
<comment type="pathway">
    <text evidence="6">Cofactor metabolism; coenzyme M-coenzyme B heterodisulfide reduction; coenzyme B and coenzyme M from coenzyme M-coenzyme B heterodisulfide: step 1/1.</text>
</comment>
<comment type="subunit">
    <text evidence="4">The dihydromethanophenazine:CoB--CoM heterodisulfide reductase is composed of two subunits; HdrD and HdrE.</text>
</comment>
<comment type="subcellular location">
    <subcellularLocation>
        <location evidence="5">Cell membrane</location>
        <topology evidence="1">Multi-pass membrane protein</topology>
    </subcellularLocation>
</comment>
<comment type="miscellaneous">
    <text evidence="7">Methanophenazine seems to mediate electron transfer from F(420)H(2) dehydrogenase to the dihydromethanophenazine:CoB--CoM heterodisulfide reductase.</text>
</comment>
<comment type="similarity">
    <text evidence="5">Belongs to the HdrE family.</text>
</comment>
<comment type="sequence caution" evidence="5">
    <conflict type="erroneous initiation">
        <sequence resource="EMBL-CDS" id="AKB14001"/>
    </conflict>
    <text>Truncated N-terminus.</text>
</comment>
<evidence type="ECO:0000255" key="1"/>
<evidence type="ECO:0000269" key="2">
    <source>
    </source>
</evidence>
<evidence type="ECO:0000269" key="3">
    <source>
    </source>
</evidence>
<evidence type="ECO:0000269" key="4">
    <source>
    </source>
</evidence>
<evidence type="ECO:0000305" key="5"/>
<evidence type="ECO:0000305" key="6">
    <source>
    </source>
</evidence>
<evidence type="ECO:0000305" key="7">
    <source>
    </source>
</evidence>
<evidence type="ECO:0000305" key="8">
    <source>
    </source>
</evidence>
<evidence type="ECO:0000312" key="9">
    <source>
        <dbReference type="EMBL" id="AKB14001.1"/>
    </source>
</evidence>
<name>HDRE_METTT</name>
<protein>
    <recommendedName>
        <fullName evidence="5">Dihydromethanophenazine:CoB--CoM heterodisulfide reductase subunit E</fullName>
        <ecNumber evidence="2 3 8">1.8.98.1</ecNumber>
    </recommendedName>
    <alternativeName>
        <fullName evidence="5">CoB--CoM heterodisulfide reductase subunit E</fullName>
    </alternativeName>
    <alternativeName>
        <fullName evidence="5">Coenzyme B:coenzyme M:methanophenazine oxidoreductase subunit E</fullName>
    </alternativeName>
</protein>
<dbReference type="EC" id="1.8.98.1" evidence="2 3 8"/>
<dbReference type="EMBL" id="CP009501">
    <property type="protein sequence ID" value="AKB14001.1"/>
    <property type="status" value="ALT_INIT"/>
    <property type="molecule type" value="Genomic_DNA"/>
</dbReference>
<dbReference type="RefSeq" id="WP_048167968.1">
    <property type="nucleotide sequence ID" value="NZ_CP009501.1"/>
</dbReference>
<dbReference type="STRING" id="523844.MSTHT_2243"/>
<dbReference type="GeneID" id="41602356"/>
<dbReference type="KEGG" id="mthr:MSTHT_2243"/>
<dbReference type="PATRIC" id="fig|523844.20.peg.2747"/>
<dbReference type="HOGENOM" id="CLU_1072042_0_0_2"/>
<dbReference type="OrthoDB" id="146657at2157"/>
<dbReference type="UniPathway" id="UPA00647">
    <property type="reaction ID" value="UER00700"/>
</dbReference>
<dbReference type="Proteomes" id="UP000066529">
    <property type="component" value="Chromosome"/>
</dbReference>
<dbReference type="GO" id="GO:0005886">
    <property type="term" value="C:plasma membrane"/>
    <property type="evidence" value="ECO:0007669"/>
    <property type="project" value="UniProtKB-SubCell"/>
</dbReference>
<dbReference type="GO" id="GO:0051912">
    <property type="term" value="F:CoB--CoM heterodisulfide reductase activity"/>
    <property type="evidence" value="ECO:0007669"/>
    <property type="project" value="UniProtKB-EC"/>
</dbReference>
<dbReference type="GO" id="GO:0046872">
    <property type="term" value="F:metal ion binding"/>
    <property type="evidence" value="ECO:0007669"/>
    <property type="project" value="UniProtKB-KW"/>
</dbReference>
<dbReference type="GO" id="GO:0015948">
    <property type="term" value="P:methanogenesis"/>
    <property type="evidence" value="ECO:0007669"/>
    <property type="project" value="UniProtKB-KW"/>
</dbReference>
<dbReference type="Gene3D" id="1.20.950.20">
    <property type="entry name" value="Transmembrane di-heme cytochromes, Chain C"/>
    <property type="match status" value="1"/>
</dbReference>
<dbReference type="InterPro" id="IPR036197">
    <property type="entry name" value="NarG-like_sf"/>
</dbReference>
<dbReference type="SUPFAM" id="SSF103501">
    <property type="entry name" value="Respiratory nitrate reductase 1 gamma chain"/>
    <property type="match status" value="1"/>
</dbReference>
<organism>
    <name type="scientific">Methanosarcina thermophila (strain ATCC 43570 / DSM 1825 / OCM 12 / VKM B-1830 / TM-1)</name>
    <dbReference type="NCBI Taxonomy" id="523844"/>
    <lineage>
        <taxon>Archaea</taxon>
        <taxon>Methanobacteriati</taxon>
        <taxon>Methanobacteriota</taxon>
        <taxon>Stenosarchaea group</taxon>
        <taxon>Methanomicrobia</taxon>
        <taxon>Methanosarcinales</taxon>
        <taxon>Methanosarcinaceae</taxon>
        <taxon>Methanosarcina</taxon>
    </lineage>
</organism>
<feature type="initiator methionine" description="Removed" evidence="4">
    <location>
        <position position="1"/>
    </location>
</feature>
<feature type="chain" id="PRO_0000443857" description="Dihydromethanophenazine:CoB--CoM heterodisulfide reductase subunit E">
    <location>
        <begin position="2"/>
        <end position="264"/>
    </location>
</feature>
<feature type="transmembrane region" description="Helical" evidence="1">
    <location>
        <begin position="19"/>
        <end position="39"/>
    </location>
</feature>
<feature type="transmembrane region" description="Helical" evidence="1">
    <location>
        <begin position="109"/>
        <end position="129"/>
    </location>
</feature>
<feature type="transmembrane region" description="Helical" evidence="1">
    <location>
        <begin position="152"/>
        <end position="172"/>
    </location>
</feature>
<feature type="transmembrane region" description="Helical" evidence="1">
    <location>
        <begin position="185"/>
        <end position="205"/>
    </location>
</feature>
<feature type="transmembrane region" description="Helical" evidence="1">
    <location>
        <begin position="222"/>
        <end position="242"/>
    </location>
</feature>
<sequence length="264" mass="29753">MSEEMVYFSGLSDALRITFVQMMILSAIAIVIFLYGMIITLQKWGSGATGYALEPQEGKRGSAITFLKTWWKQVTEKSPHGHGKPILEILILDILFQRRILKRSGLRWVMHILIFAGWMTLFALSGLMFSVELTHMIGIELPFTPHMFREWLSIPNYIFGYILLIGVLIAIVRRLFVSEVREASIMYDWVLIGVVFLVTISGFLADGIRTGLIWDFGLDPSLAPPAALFHSVISLLFCIAFIPYSKYIHIIAIPLALLANKGGE</sequence>
<proteinExistence type="evidence at protein level"/>
<gene>
    <name type="primary">hdrE</name>
    <name evidence="9" type="ORF">MSTHT_2243</name>
</gene>